<proteinExistence type="evidence at protein level"/>
<accession>O95502</accession>
<dbReference type="EMBL" id="AL008583">
    <property type="status" value="NOT_ANNOTATED_CDS"/>
    <property type="molecule type" value="Genomic_DNA"/>
</dbReference>
<dbReference type="CCDS" id="CCDS33647.1"/>
<dbReference type="RefSeq" id="NP_055108.2">
    <property type="nucleotide sequence ID" value="NM_014293.3"/>
</dbReference>
<dbReference type="SMR" id="O95502"/>
<dbReference type="BioGRID" id="117029">
    <property type="interactions" value="30"/>
</dbReference>
<dbReference type="FunCoup" id="O95502">
    <property type="interactions" value="14"/>
</dbReference>
<dbReference type="IntAct" id="O95502">
    <property type="interactions" value="24"/>
</dbReference>
<dbReference type="STRING" id="9606.ENSP00000327545"/>
<dbReference type="GlyConnect" id="1556">
    <property type="glycosylation" value="1 N-Linked glycan (1 site)"/>
</dbReference>
<dbReference type="GlyCosmos" id="O95502">
    <property type="glycosylation" value="4 sites, 2 glycans"/>
</dbReference>
<dbReference type="GlyGen" id="O95502">
    <property type="glycosylation" value="5 sites, 3 N-linked glycans (2 sites), 2 O-linked glycans (2 sites)"/>
</dbReference>
<dbReference type="iPTMnet" id="O95502"/>
<dbReference type="PhosphoSitePlus" id="O95502"/>
<dbReference type="BioMuta" id="NPTXR"/>
<dbReference type="jPOST" id="O95502"/>
<dbReference type="MassIVE" id="O95502"/>
<dbReference type="PaxDb" id="9606-ENSP00000327545"/>
<dbReference type="PeptideAtlas" id="O95502"/>
<dbReference type="ProteomicsDB" id="50931"/>
<dbReference type="Antibodypedia" id="21566">
    <property type="antibodies" value="85 antibodies from 21 providers"/>
</dbReference>
<dbReference type="DNASU" id="23467"/>
<dbReference type="Ensembl" id="ENST00000333039.4">
    <property type="protein sequence ID" value="ENSP00000327545.3"/>
    <property type="gene ID" value="ENSG00000221890.7"/>
</dbReference>
<dbReference type="GeneID" id="23467"/>
<dbReference type="KEGG" id="hsa:23467"/>
<dbReference type="MANE-Select" id="ENST00000333039.4">
    <property type="protein sequence ID" value="ENSP00000327545.3"/>
    <property type="RefSeq nucleotide sequence ID" value="NM_014293.4"/>
    <property type="RefSeq protein sequence ID" value="NP_055108.2"/>
</dbReference>
<dbReference type="UCSC" id="uc062eix.1">
    <property type="organism name" value="human"/>
</dbReference>
<dbReference type="AGR" id="HGNC:7954"/>
<dbReference type="CTD" id="23467"/>
<dbReference type="DisGeNET" id="23467"/>
<dbReference type="GeneCards" id="NPTXR"/>
<dbReference type="HGNC" id="HGNC:7954">
    <property type="gene designation" value="NPTXR"/>
</dbReference>
<dbReference type="HPA" id="ENSG00000221890">
    <property type="expression patterns" value="Tissue enriched (brain)"/>
</dbReference>
<dbReference type="MIM" id="609474">
    <property type="type" value="gene"/>
</dbReference>
<dbReference type="neXtProt" id="NX_O95502"/>
<dbReference type="OpenTargets" id="ENSG00000221890"/>
<dbReference type="PharmGKB" id="PA31740"/>
<dbReference type="VEuPathDB" id="HostDB:ENSG00000221890"/>
<dbReference type="eggNOG" id="ENOG502RCVB">
    <property type="taxonomic scope" value="Eukaryota"/>
</dbReference>
<dbReference type="GeneTree" id="ENSGT00940000154405"/>
<dbReference type="HOGENOM" id="CLU_032051_0_0_1"/>
<dbReference type="InParanoid" id="O95502"/>
<dbReference type="OMA" id="IAPWTDQ"/>
<dbReference type="OrthoDB" id="1918685at2759"/>
<dbReference type="PAN-GO" id="O95502">
    <property type="GO annotations" value="0 GO annotations based on evolutionary models"/>
</dbReference>
<dbReference type="PhylomeDB" id="O95502"/>
<dbReference type="TreeFam" id="TF330208"/>
<dbReference type="PathwayCommons" id="O95502"/>
<dbReference type="SignaLink" id="O95502"/>
<dbReference type="BioGRID-ORCS" id="23467">
    <property type="hits" value="9 hits in 1063 CRISPR screens"/>
</dbReference>
<dbReference type="ChiTaRS" id="NPTXR">
    <property type="organism name" value="human"/>
</dbReference>
<dbReference type="GeneWiki" id="NPTXR"/>
<dbReference type="GenomeRNAi" id="23467"/>
<dbReference type="Pharos" id="O95502">
    <property type="development level" value="Tbio"/>
</dbReference>
<dbReference type="PRO" id="PR:O95502"/>
<dbReference type="Proteomes" id="UP000005640">
    <property type="component" value="Chromosome 22"/>
</dbReference>
<dbReference type="RNAct" id="O95502">
    <property type="molecule type" value="protein"/>
</dbReference>
<dbReference type="Bgee" id="ENSG00000221890">
    <property type="expression patterns" value="Expressed in Brodmann (1909) area 10 and 156 other cell types or tissues"/>
</dbReference>
<dbReference type="ExpressionAtlas" id="O95502">
    <property type="expression patterns" value="baseline and differential"/>
</dbReference>
<dbReference type="GO" id="GO:0098978">
    <property type="term" value="C:glutamatergic synapse"/>
    <property type="evidence" value="ECO:0000314"/>
    <property type="project" value="SynGO"/>
</dbReference>
<dbReference type="GO" id="GO:0016020">
    <property type="term" value="C:membrane"/>
    <property type="evidence" value="ECO:0007669"/>
    <property type="project" value="UniProtKB-SubCell"/>
</dbReference>
<dbReference type="GO" id="GO:0046872">
    <property type="term" value="F:metal ion binding"/>
    <property type="evidence" value="ECO:0007669"/>
    <property type="project" value="UniProtKB-KW"/>
</dbReference>
<dbReference type="CDD" id="cd00152">
    <property type="entry name" value="PTX"/>
    <property type="match status" value="1"/>
</dbReference>
<dbReference type="FunFam" id="2.60.120.200:FF:000012">
    <property type="entry name" value="neuronal pentraxin receptor"/>
    <property type="match status" value="1"/>
</dbReference>
<dbReference type="Gene3D" id="2.60.120.200">
    <property type="match status" value="1"/>
</dbReference>
<dbReference type="InterPro" id="IPR013320">
    <property type="entry name" value="ConA-like_dom_sf"/>
</dbReference>
<dbReference type="InterPro" id="IPR051360">
    <property type="entry name" value="Neuronal_Pentraxin_Related"/>
</dbReference>
<dbReference type="InterPro" id="IPR001759">
    <property type="entry name" value="Pentraxin-related"/>
</dbReference>
<dbReference type="PANTHER" id="PTHR19277:SF94">
    <property type="entry name" value="NEURONAL PENTRAXIN RECEPTOR"/>
    <property type="match status" value="1"/>
</dbReference>
<dbReference type="PANTHER" id="PTHR19277">
    <property type="entry name" value="PENTRAXIN"/>
    <property type="match status" value="1"/>
</dbReference>
<dbReference type="Pfam" id="PF00354">
    <property type="entry name" value="Pentaxin"/>
    <property type="match status" value="1"/>
</dbReference>
<dbReference type="PRINTS" id="PR00895">
    <property type="entry name" value="PENTAXIN"/>
</dbReference>
<dbReference type="SMART" id="SM00159">
    <property type="entry name" value="PTX"/>
    <property type="match status" value="1"/>
</dbReference>
<dbReference type="SUPFAM" id="SSF49899">
    <property type="entry name" value="Concanavalin A-like lectins/glucanases"/>
    <property type="match status" value="1"/>
</dbReference>
<dbReference type="PROSITE" id="PS51828">
    <property type="entry name" value="PTX_2"/>
    <property type="match status" value="1"/>
</dbReference>
<reference key="1">
    <citation type="journal article" date="1999" name="Nature">
        <title>The DNA sequence of human chromosome 22.</title>
        <authorList>
            <person name="Dunham I."/>
            <person name="Hunt A.R."/>
            <person name="Collins J.E."/>
            <person name="Bruskiewich R."/>
            <person name="Beare D.M."/>
            <person name="Clamp M."/>
            <person name="Smink L.J."/>
            <person name="Ainscough R."/>
            <person name="Almeida J.P."/>
            <person name="Babbage A.K."/>
            <person name="Bagguley C."/>
            <person name="Bailey J."/>
            <person name="Barlow K.F."/>
            <person name="Bates K.N."/>
            <person name="Beasley O.P."/>
            <person name="Bird C.P."/>
            <person name="Blakey S.E."/>
            <person name="Bridgeman A.M."/>
            <person name="Buck D."/>
            <person name="Burgess J."/>
            <person name="Burrill W.D."/>
            <person name="Burton J."/>
            <person name="Carder C."/>
            <person name="Carter N.P."/>
            <person name="Chen Y."/>
            <person name="Clark G."/>
            <person name="Clegg S.M."/>
            <person name="Cobley V.E."/>
            <person name="Cole C.G."/>
            <person name="Collier R.E."/>
            <person name="Connor R."/>
            <person name="Conroy D."/>
            <person name="Corby N.R."/>
            <person name="Coville G.J."/>
            <person name="Cox A.V."/>
            <person name="Davis J."/>
            <person name="Dawson E."/>
            <person name="Dhami P.D."/>
            <person name="Dockree C."/>
            <person name="Dodsworth S.J."/>
            <person name="Durbin R.M."/>
            <person name="Ellington A.G."/>
            <person name="Evans K.L."/>
            <person name="Fey J.M."/>
            <person name="Fleming K."/>
            <person name="French L."/>
            <person name="Garner A.A."/>
            <person name="Gilbert J.G.R."/>
            <person name="Goward M.E."/>
            <person name="Grafham D.V."/>
            <person name="Griffiths M.N.D."/>
            <person name="Hall C."/>
            <person name="Hall R.E."/>
            <person name="Hall-Tamlyn G."/>
            <person name="Heathcott R.W."/>
            <person name="Ho S."/>
            <person name="Holmes S."/>
            <person name="Hunt S.E."/>
            <person name="Jones M.C."/>
            <person name="Kershaw J."/>
            <person name="Kimberley A.M."/>
            <person name="King A."/>
            <person name="Laird G.K."/>
            <person name="Langford C.F."/>
            <person name="Leversha M.A."/>
            <person name="Lloyd C."/>
            <person name="Lloyd D.M."/>
            <person name="Martyn I.D."/>
            <person name="Mashreghi-Mohammadi M."/>
            <person name="Matthews L.H."/>
            <person name="Mccann O.T."/>
            <person name="Mcclay J."/>
            <person name="Mclaren S."/>
            <person name="McMurray A.A."/>
            <person name="Milne S.A."/>
            <person name="Mortimore B.J."/>
            <person name="Odell C.N."/>
            <person name="Pavitt R."/>
            <person name="Pearce A.V."/>
            <person name="Pearson D."/>
            <person name="Phillimore B.J.C.T."/>
            <person name="Phillips S.H."/>
            <person name="Plumb R.W."/>
            <person name="Ramsay H."/>
            <person name="Ramsey Y."/>
            <person name="Rogers L."/>
            <person name="Ross M.T."/>
            <person name="Scott C.E."/>
            <person name="Sehra H.K."/>
            <person name="Skuce C.D."/>
            <person name="Smalley S."/>
            <person name="Smith M.L."/>
            <person name="Soderlund C."/>
            <person name="Spragon L."/>
            <person name="Steward C.A."/>
            <person name="Sulston J.E."/>
            <person name="Swann R.M."/>
            <person name="Vaudin M."/>
            <person name="Wall M."/>
            <person name="Wallis J.M."/>
            <person name="Whiteley M.N."/>
            <person name="Willey D.L."/>
            <person name="Williams L."/>
            <person name="Williams S.A."/>
            <person name="Williamson H."/>
            <person name="Wilmer T.E."/>
            <person name="Wilming L."/>
            <person name="Wright C.L."/>
            <person name="Hubbard T."/>
            <person name="Bentley D.R."/>
            <person name="Beck S."/>
            <person name="Rogers J."/>
            <person name="Shimizu N."/>
            <person name="Minoshima S."/>
            <person name="Kawasaki K."/>
            <person name="Sasaki T."/>
            <person name="Asakawa S."/>
            <person name="Kudoh J."/>
            <person name="Shintani A."/>
            <person name="Shibuya K."/>
            <person name="Yoshizaki Y."/>
            <person name="Aoki N."/>
            <person name="Mitsuyama S."/>
            <person name="Roe B.A."/>
            <person name="Chen F."/>
            <person name="Chu L."/>
            <person name="Crabtree J."/>
            <person name="Deschamps S."/>
            <person name="Do A."/>
            <person name="Do T."/>
            <person name="Dorman A."/>
            <person name="Fang F."/>
            <person name="Fu Y."/>
            <person name="Hu P."/>
            <person name="Hua A."/>
            <person name="Kenton S."/>
            <person name="Lai H."/>
            <person name="Lao H.I."/>
            <person name="Lewis J."/>
            <person name="Lewis S."/>
            <person name="Lin S.-P."/>
            <person name="Loh P."/>
            <person name="Malaj E."/>
            <person name="Nguyen T."/>
            <person name="Pan H."/>
            <person name="Phan S."/>
            <person name="Qi S."/>
            <person name="Qian Y."/>
            <person name="Ray L."/>
            <person name="Ren Q."/>
            <person name="Shaull S."/>
            <person name="Sloan D."/>
            <person name="Song L."/>
            <person name="Wang Q."/>
            <person name="Wang Y."/>
            <person name="Wang Z."/>
            <person name="White J."/>
            <person name="Willingham D."/>
            <person name="Wu H."/>
            <person name="Yao Z."/>
            <person name="Zhan M."/>
            <person name="Zhang G."/>
            <person name="Chissoe S."/>
            <person name="Murray J."/>
            <person name="Miller N."/>
            <person name="Minx P."/>
            <person name="Fulton R."/>
            <person name="Johnson D."/>
            <person name="Bemis G."/>
            <person name="Bentley D."/>
            <person name="Bradshaw H."/>
            <person name="Bourne S."/>
            <person name="Cordes M."/>
            <person name="Du Z."/>
            <person name="Fulton L."/>
            <person name="Goela D."/>
            <person name="Graves T."/>
            <person name="Hawkins J."/>
            <person name="Hinds K."/>
            <person name="Kemp K."/>
            <person name="Latreille P."/>
            <person name="Layman D."/>
            <person name="Ozersky P."/>
            <person name="Rohlfing T."/>
            <person name="Scheet P."/>
            <person name="Walker C."/>
            <person name="Wamsley A."/>
            <person name="Wohldmann P."/>
            <person name="Pepin K."/>
            <person name="Nelson J."/>
            <person name="Korf I."/>
            <person name="Bedell J.A."/>
            <person name="Hillier L.W."/>
            <person name="Mardis E."/>
            <person name="Waterston R."/>
            <person name="Wilson R."/>
            <person name="Emanuel B.S."/>
            <person name="Shaikh T."/>
            <person name="Kurahashi H."/>
            <person name="Saitta S."/>
            <person name="Budarf M.L."/>
            <person name="McDermid H.E."/>
            <person name="Johnson A."/>
            <person name="Wong A.C.C."/>
            <person name="Morrow B.E."/>
            <person name="Edelmann L."/>
            <person name="Kim U.J."/>
            <person name="Shizuya H."/>
            <person name="Simon M.I."/>
            <person name="Dumanski J.P."/>
            <person name="Peyrard M."/>
            <person name="Kedra D."/>
            <person name="Seroussi E."/>
            <person name="Fransson I."/>
            <person name="Tapia I."/>
            <person name="Bruder C.E."/>
            <person name="O'Brien K.P."/>
            <person name="Wilkinson P."/>
            <person name="Bodenteich A."/>
            <person name="Hartman K."/>
            <person name="Hu X."/>
            <person name="Khan A.S."/>
            <person name="Lane L."/>
            <person name="Tilahun Y."/>
            <person name="Wright H."/>
        </authorList>
    </citation>
    <scope>NUCLEOTIDE SEQUENCE [LARGE SCALE GENOMIC DNA]</scope>
</reference>
<protein>
    <recommendedName>
        <fullName>Neuronal pentraxin receptor</fullName>
    </recommendedName>
</protein>
<organism>
    <name type="scientific">Homo sapiens</name>
    <name type="common">Human</name>
    <dbReference type="NCBI Taxonomy" id="9606"/>
    <lineage>
        <taxon>Eukaryota</taxon>
        <taxon>Metazoa</taxon>
        <taxon>Chordata</taxon>
        <taxon>Craniata</taxon>
        <taxon>Vertebrata</taxon>
        <taxon>Euteleostomi</taxon>
        <taxon>Mammalia</taxon>
        <taxon>Eutheria</taxon>
        <taxon>Euarchontoglires</taxon>
        <taxon>Primates</taxon>
        <taxon>Haplorrhini</taxon>
        <taxon>Catarrhini</taxon>
        <taxon>Hominidae</taxon>
        <taxon>Homo</taxon>
    </lineage>
</organism>
<gene>
    <name type="primary">NPTXR</name>
</gene>
<comment type="function">
    <text evidence="1">May be involved in mediating uptake of synaptic material during synapse remodeling or in mediating the synaptic clustering of AMPA glutamate receptors at a subset of excitatory synapses.</text>
</comment>
<comment type="cofactor">
    <cofactor evidence="1">
        <name>Ca(2+)</name>
        <dbReference type="ChEBI" id="CHEBI:29108"/>
    </cofactor>
    <text evidence="1">Binds 2 calcium ions per subunit.</text>
</comment>
<comment type="subunit">
    <text evidence="1">Heteropentamer with NPTX1 and/or NPTX2. Also binds taipoxin-associated calcium-binding protein 49 (TCBP49/RCN2). Interacts with KLHL2 (By similarity).</text>
</comment>
<comment type="subcellular location">
    <subcellularLocation>
        <location evidence="5">Membrane</location>
        <topology evidence="5">Single-pass type II membrane protein</topology>
    </subcellularLocation>
</comment>
<comment type="PTM">
    <text evidence="1">Ubiquitinated by a cullin-RING-based BCR (BTB-CUL3-RBX1) E3 ubiquitin-protein ligase complex containing KLHL2.</text>
</comment>
<evidence type="ECO:0000250" key="1"/>
<evidence type="ECO:0000255" key="2"/>
<evidence type="ECO:0000255" key="3">
    <source>
        <dbReference type="PROSITE-ProRule" id="PRU01172"/>
    </source>
</evidence>
<evidence type="ECO:0000256" key="4">
    <source>
        <dbReference type="SAM" id="MobiDB-lite"/>
    </source>
</evidence>
<evidence type="ECO:0000305" key="5"/>
<sequence>MKFLAVLLAAGMLAFLGAVICIIASVPLAASPARALPGGADNASVASGAAASPGPQRSLSALHGAGGSAGPPALPGAPAASAHPLPPGPLFSRFLCTPLAAACPSGAQQGDAAGAAPGEREELLLLQSTAEQLRQTALQQEARIRADQDTIRELTGKLGRCESGLPRGLQGAGPRRDTMADGPWDSPALILELEDAVRALRDRIDRLEQELPARVNLSAAPAPVSAVPTGLHSKMDQLEGQLLAQVLALEKERVALSHSSRRQRQEVEKELDVLQGRVAELEHGSSAYSPPDAFKISIPIRNNYMYARVRKALPELYAFTACMWLRSRSSGTGQGTPFSYSVPGQANEIVLLEAGHEPMELLINDKVAQLPLSLKDNGWHHICIAWTTRDGLWSAYQDGELQGSGENLAAWHPIKPHGILILGQEQDTLGGRFDATQAFVGDIAQFNLWDHALTPAQVLGIANCTAPLLGNVLPWEDKLVEAFGGATKAAFDVCKGRAKA</sequence>
<name>NPTXR_HUMAN</name>
<keyword id="KW-0106">Calcium</keyword>
<keyword id="KW-1015">Disulfide bond</keyword>
<keyword id="KW-0325">Glycoprotein</keyword>
<keyword id="KW-0472">Membrane</keyword>
<keyword id="KW-0479">Metal-binding</keyword>
<keyword id="KW-1267">Proteomics identification</keyword>
<keyword id="KW-0675">Receptor</keyword>
<keyword id="KW-1185">Reference proteome</keyword>
<keyword id="KW-0735">Signal-anchor</keyword>
<keyword id="KW-0812">Transmembrane</keyword>
<keyword id="KW-1133">Transmembrane helix</keyword>
<keyword id="KW-0832">Ubl conjugation</keyword>
<feature type="chain" id="PRO_0000162506" description="Neuronal pentraxin receptor">
    <location>
        <begin position="1"/>
        <end position="500"/>
    </location>
</feature>
<feature type="topological domain" description="Cytoplasmic" evidence="2">
    <location>
        <begin position="1"/>
        <end position="2"/>
    </location>
</feature>
<feature type="transmembrane region" description="Helical; Signal-anchor for type II membrane protein" evidence="2">
    <location>
        <begin position="3"/>
        <end position="23"/>
    </location>
</feature>
<feature type="topological domain" description="Extracellular" evidence="2">
    <location>
        <begin position="24"/>
        <end position="500"/>
    </location>
</feature>
<feature type="domain" description="Pentraxin (PTX)" evidence="3">
    <location>
        <begin position="292"/>
        <end position="494"/>
    </location>
</feature>
<feature type="region of interest" description="Disordered" evidence="4">
    <location>
        <begin position="42"/>
        <end position="81"/>
    </location>
</feature>
<feature type="region of interest" description="Disordered" evidence="4">
    <location>
        <begin position="162"/>
        <end position="183"/>
    </location>
</feature>
<feature type="compositionally biased region" description="Low complexity" evidence="4">
    <location>
        <begin position="42"/>
        <end position="63"/>
    </location>
</feature>
<feature type="binding site" evidence="1">
    <location>
        <position position="347"/>
    </location>
    <ligand>
        <name>Ca(2+)</name>
        <dbReference type="ChEBI" id="CHEBI:29108"/>
        <label>1</label>
    </ligand>
</feature>
<feature type="binding site" evidence="1">
    <location>
        <position position="425"/>
    </location>
    <ligand>
        <name>Ca(2+)</name>
        <dbReference type="ChEBI" id="CHEBI:29108"/>
        <label>1</label>
    </ligand>
</feature>
<feature type="binding site" evidence="3">
    <location>
        <position position="425"/>
    </location>
    <ligand>
        <name>Ca(2+)</name>
        <dbReference type="ChEBI" id="CHEBI:29108"/>
        <label>2</label>
    </ligand>
</feature>
<feature type="binding site" evidence="1">
    <location>
        <position position="426"/>
    </location>
    <ligand>
        <name>Ca(2+)</name>
        <dbReference type="ChEBI" id="CHEBI:29108"/>
        <label>1</label>
    </ligand>
</feature>
<feature type="binding site" evidence="1">
    <location>
        <position position="427"/>
    </location>
    <ligand>
        <name>Ca(2+)</name>
        <dbReference type="ChEBI" id="CHEBI:29108"/>
        <label>1</label>
    </ligand>
</feature>
<feature type="binding site" evidence="3">
    <location>
        <position position="427"/>
    </location>
    <ligand>
        <name>Ca(2+)</name>
        <dbReference type="ChEBI" id="CHEBI:29108"/>
        <label>2</label>
    </ligand>
</feature>
<feature type="binding site" evidence="3">
    <location>
        <position position="437"/>
    </location>
    <ligand>
        <name>Ca(2+)</name>
        <dbReference type="ChEBI" id="CHEBI:29108"/>
        <label>2</label>
    </ligand>
</feature>
<feature type="glycosylation site" description="N-linked (GlcNAc...) asparagine" evidence="2">
    <location>
        <position position="42"/>
    </location>
</feature>
<feature type="glycosylation site" description="N-linked (GlcNAc...) asparagine" evidence="2">
    <location>
        <position position="216"/>
    </location>
</feature>
<feature type="glycosylation site" description="N-linked (GlcNAc...) asparagine" evidence="2">
    <location>
        <position position="463"/>
    </location>
</feature>
<feature type="disulfide bond" evidence="3">
    <location>
        <begin position="322"/>
        <end position="383"/>
    </location>
</feature>